<reference key="1">
    <citation type="journal article" date="2004" name="Nucleic Acids Res.">
        <title>Thermoadaptation trait revealed by the genome sequence of thermophilic Geobacillus kaustophilus.</title>
        <authorList>
            <person name="Takami H."/>
            <person name="Takaki Y."/>
            <person name="Chee G.-J."/>
            <person name="Nishi S."/>
            <person name="Shimamura S."/>
            <person name="Suzuki H."/>
            <person name="Matsui S."/>
            <person name="Uchiyama I."/>
        </authorList>
    </citation>
    <scope>NUCLEOTIDE SEQUENCE [LARGE SCALE GENOMIC DNA]</scope>
    <source>
        <strain>HTA426</strain>
    </source>
</reference>
<proteinExistence type="inferred from homology"/>
<dbReference type="EC" id="5.4.3.8" evidence="1"/>
<dbReference type="EMBL" id="BA000043">
    <property type="protein sequence ID" value="BAD76927.1"/>
    <property type="molecule type" value="Genomic_DNA"/>
</dbReference>
<dbReference type="SMR" id="Q5KWK9"/>
<dbReference type="STRING" id="235909.GK2642"/>
<dbReference type="KEGG" id="gka:GK2642"/>
<dbReference type="eggNOG" id="COG0001">
    <property type="taxonomic scope" value="Bacteria"/>
</dbReference>
<dbReference type="HOGENOM" id="CLU_016922_1_5_9"/>
<dbReference type="UniPathway" id="UPA00251">
    <property type="reaction ID" value="UER00317"/>
</dbReference>
<dbReference type="Proteomes" id="UP000001172">
    <property type="component" value="Chromosome"/>
</dbReference>
<dbReference type="GO" id="GO:0005737">
    <property type="term" value="C:cytoplasm"/>
    <property type="evidence" value="ECO:0007669"/>
    <property type="project" value="UniProtKB-SubCell"/>
</dbReference>
<dbReference type="GO" id="GO:0042286">
    <property type="term" value="F:glutamate-1-semialdehyde 2,1-aminomutase activity"/>
    <property type="evidence" value="ECO:0007669"/>
    <property type="project" value="UniProtKB-UniRule"/>
</dbReference>
<dbReference type="GO" id="GO:0030170">
    <property type="term" value="F:pyridoxal phosphate binding"/>
    <property type="evidence" value="ECO:0007669"/>
    <property type="project" value="InterPro"/>
</dbReference>
<dbReference type="GO" id="GO:0008483">
    <property type="term" value="F:transaminase activity"/>
    <property type="evidence" value="ECO:0007669"/>
    <property type="project" value="InterPro"/>
</dbReference>
<dbReference type="GO" id="GO:0006782">
    <property type="term" value="P:protoporphyrinogen IX biosynthetic process"/>
    <property type="evidence" value="ECO:0007669"/>
    <property type="project" value="UniProtKB-UniRule"/>
</dbReference>
<dbReference type="CDD" id="cd00610">
    <property type="entry name" value="OAT_like"/>
    <property type="match status" value="1"/>
</dbReference>
<dbReference type="FunFam" id="3.40.640.10:FF:000021">
    <property type="entry name" value="Glutamate-1-semialdehyde 2,1-aminomutase"/>
    <property type="match status" value="1"/>
</dbReference>
<dbReference type="Gene3D" id="3.90.1150.10">
    <property type="entry name" value="Aspartate Aminotransferase, domain 1"/>
    <property type="match status" value="1"/>
</dbReference>
<dbReference type="Gene3D" id="3.40.640.10">
    <property type="entry name" value="Type I PLP-dependent aspartate aminotransferase-like (Major domain)"/>
    <property type="match status" value="1"/>
</dbReference>
<dbReference type="HAMAP" id="MF_00375">
    <property type="entry name" value="HemL_aminotrans_3"/>
    <property type="match status" value="1"/>
</dbReference>
<dbReference type="InterPro" id="IPR004639">
    <property type="entry name" value="4pyrrol_synth_GluAld_NH2Trfase"/>
</dbReference>
<dbReference type="InterPro" id="IPR005814">
    <property type="entry name" value="Aminotrans_3"/>
</dbReference>
<dbReference type="InterPro" id="IPR049704">
    <property type="entry name" value="Aminotrans_3_PPA_site"/>
</dbReference>
<dbReference type="InterPro" id="IPR015424">
    <property type="entry name" value="PyrdxlP-dep_Trfase"/>
</dbReference>
<dbReference type="InterPro" id="IPR015421">
    <property type="entry name" value="PyrdxlP-dep_Trfase_major"/>
</dbReference>
<dbReference type="InterPro" id="IPR015422">
    <property type="entry name" value="PyrdxlP-dep_Trfase_small"/>
</dbReference>
<dbReference type="NCBIfam" id="TIGR00713">
    <property type="entry name" value="hemL"/>
    <property type="match status" value="1"/>
</dbReference>
<dbReference type="NCBIfam" id="NF000818">
    <property type="entry name" value="PRK00062.1"/>
    <property type="match status" value="1"/>
</dbReference>
<dbReference type="PANTHER" id="PTHR43713">
    <property type="entry name" value="GLUTAMATE-1-SEMIALDEHYDE 2,1-AMINOMUTASE"/>
    <property type="match status" value="1"/>
</dbReference>
<dbReference type="PANTHER" id="PTHR43713:SF3">
    <property type="entry name" value="GLUTAMATE-1-SEMIALDEHYDE 2,1-AMINOMUTASE 1, CHLOROPLASTIC-RELATED"/>
    <property type="match status" value="1"/>
</dbReference>
<dbReference type="Pfam" id="PF00202">
    <property type="entry name" value="Aminotran_3"/>
    <property type="match status" value="1"/>
</dbReference>
<dbReference type="SUPFAM" id="SSF53383">
    <property type="entry name" value="PLP-dependent transferases"/>
    <property type="match status" value="1"/>
</dbReference>
<dbReference type="PROSITE" id="PS00600">
    <property type="entry name" value="AA_TRANSFER_CLASS_3"/>
    <property type="match status" value="1"/>
</dbReference>
<organism>
    <name type="scientific">Geobacillus kaustophilus (strain HTA426)</name>
    <dbReference type="NCBI Taxonomy" id="235909"/>
    <lineage>
        <taxon>Bacteria</taxon>
        <taxon>Bacillati</taxon>
        <taxon>Bacillota</taxon>
        <taxon>Bacilli</taxon>
        <taxon>Bacillales</taxon>
        <taxon>Anoxybacillaceae</taxon>
        <taxon>Geobacillus</taxon>
        <taxon>Geobacillus thermoleovorans group</taxon>
    </lineage>
</organism>
<feature type="chain" id="PRO_0000243574" description="Glutamate-1-semialdehyde 2,1-aminomutase 2">
    <location>
        <begin position="1"/>
        <end position="429"/>
    </location>
</feature>
<feature type="modified residue" description="N6-(pyridoxal phosphate)lysine" evidence="1">
    <location>
        <position position="268"/>
    </location>
</feature>
<comment type="catalytic activity">
    <reaction evidence="1">
        <text>(S)-4-amino-5-oxopentanoate = 5-aminolevulinate</text>
        <dbReference type="Rhea" id="RHEA:14265"/>
        <dbReference type="ChEBI" id="CHEBI:57501"/>
        <dbReference type="ChEBI" id="CHEBI:356416"/>
        <dbReference type="EC" id="5.4.3.8"/>
    </reaction>
</comment>
<comment type="cofactor">
    <cofactor evidence="1">
        <name>pyridoxal 5'-phosphate</name>
        <dbReference type="ChEBI" id="CHEBI:597326"/>
    </cofactor>
</comment>
<comment type="pathway">
    <text evidence="1">Porphyrin-containing compound metabolism; protoporphyrin-IX biosynthesis; 5-aminolevulinate from L-glutamyl-tRNA(Glu): step 2/2.</text>
</comment>
<comment type="subunit">
    <text evidence="1">Homodimer.</text>
</comment>
<comment type="subcellular location">
    <subcellularLocation>
        <location evidence="1">Cytoplasm</location>
    </subcellularLocation>
</comment>
<comment type="similarity">
    <text evidence="1">Belongs to the class-III pyridoxal-phosphate-dependent aminotransferase family. HemL subfamily.</text>
</comment>
<sequence length="429" mass="46530">MRSYERSKTAYEEAVKLMPGGVNSPVRAFKSVGMTPIFMARGQGAKIYDIDGNEYIDYVLSWGPLILGHANPQVVEALKRVAEQGTSFGAPTLLENELAKLVIERVPSVEIVRMVNSGTEATMSALRLARGYTKRNKIMKFEGSYHGHGDSLLIKAGSGVATLGLPDSPGVPESVAQHTITVPYNDLDSVRYAFERFGEDIAAVIVEPVAGNMGVVPPVPGFLEGLREVTKQYGALLIFDEVMTGFRVDYHCAQGYYGIEPDLTCLGKVIGGGLPVGAYGGKAEIMELVAPSGPVYQAGTLSGNPLAMTAGYETLRQLTPETYEELGRKAARLADGLHQAAEKYDIPHTINRAGSMIGFFFTNEPVVNYETAKTSDLELFAAYYREMANEGIFLPPSQFEGLFLSTAHSDDDIEYTIAAAERVFARLRG</sequence>
<gene>
    <name evidence="1" type="primary">hemL2</name>
    <name type="ordered locus">GK2642</name>
</gene>
<keyword id="KW-0963">Cytoplasm</keyword>
<keyword id="KW-0413">Isomerase</keyword>
<keyword id="KW-0627">Porphyrin biosynthesis</keyword>
<keyword id="KW-0663">Pyridoxal phosphate</keyword>
<keyword id="KW-1185">Reference proteome</keyword>
<accession>Q5KWK9</accession>
<name>GSA2_GEOKA</name>
<evidence type="ECO:0000255" key="1">
    <source>
        <dbReference type="HAMAP-Rule" id="MF_00375"/>
    </source>
</evidence>
<protein>
    <recommendedName>
        <fullName evidence="1">Glutamate-1-semialdehyde 2,1-aminomutase 2</fullName>
        <shortName evidence="1">GSA 2</shortName>
        <ecNumber evidence="1">5.4.3.8</ecNumber>
    </recommendedName>
    <alternativeName>
        <fullName evidence="1">Glutamate-1-semialdehyde aminotransferase 2</fullName>
        <shortName evidence="1">GSA-AT 2</shortName>
    </alternativeName>
</protein>